<name>PUR7_HAEIE</name>
<gene>
    <name evidence="1" type="primary">purC</name>
    <name type="ordered locus">CGSHiEE_03420</name>
</gene>
<proteinExistence type="inferred from homology"/>
<feature type="chain" id="PRO_1000018710" description="Phosphoribosylaminoimidazole-succinocarboxamide synthase">
    <location>
        <begin position="1"/>
        <end position="290"/>
    </location>
</feature>
<reference key="1">
    <citation type="journal article" date="2007" name="Genome Biol.">
        <title>Characterization and modeling of the Haemophilus influenzae core and supragenomes based on the complete genomic sequences of Rd and 12 clinical nontypeable strains.</title>
        <authorList>
            <person name="Hogg J.S."/>
            <person name="Hu F.Z."/>
            <person name="Janto B."/>
            <person name="Boissy R."/>
            <person name="Hayes J."/>
            <person name="Keefe R."/>
            <person name="Post J.C."/>
            <person name="Ehrlich G.D."/>
        </authorList>
    </citation>
    <scope>NUCLEOTIDE SEQUENCE [LARGE SCALE GENOMIC DNA]</scope>
    <source>
        <strain>PittEE</strain>
    </source>
</reference>
<organism>
    <name type="scientific">Haemophilus influenzae (strain PittEE)</name>
    <dbReference type="NCBI Taxonomy" id="374930"/>
    <lineage>
        <taxon>Bacteria</taxon>
        <taxon>Pseudomonadati</taxon>
        <taxon>Pseudomonadota</taxon>
        <taxon>Gammaproteobacteria</taxon>
        <taxon>Pasteurellales</taxon>
        <taxon>Pasteurellaceae</taxon>
        <taxon>Haemophilus</taxon>
    </lineage>
</organism>
<protein>
    <recommendedName>
        <fullName evidence="1">Phosphoribosylaminoimidazole-succinocarboxamide synthase</fullName>
        <ecNumber evidence="1">6.3.2.6</ecNumber>
    </recommendedName>
    <alternativeName>
        <fullName evidence="1">SAICAR synthetase</fullName>
    </alternativeName>
</protein>
<comment type="catalytic activity">
    <reaction evidence="1">
        <text>5-amino-1-(5-phospho-D-ribosyl)imidazole-4-carboxylate + L-aspartate + ATP = (2S)-2-[5-amino-1-(5-phospho-beta-D-ribosyl)imidazole-4-carboxamido]succinate + ADP + phosphate + 2 H(+)</text>
        <dbReference type="Rhea" id="RHEA:22628"/>
        <dbReference type="ChEBI" id="CHEBI:15378"/>
        <dbReference type="ChEBI" id="CHEBI:29991"/>
        <dbReference type="ChEBI" id="CHEBI:30616"/>
        <dbReference type="ChEBI" id="CHEBI:43474"/>
        <dbReference type="ChEBI" id="CHEBI:58443"/>
        <dbReference type="ChEBI" id="CHEBI:77657"/>
        <dbReference type="ChEBI" id="CHEBI:456216"/>
        <dbReference type="EC" id="6.3.2.6"/>
    </reaction>
</comment>
<comment type="pathway">
    <text evidence="1">Purine metabolism; IMP biosynthesis via de novo pathway; 5-amino-1-(5-phospho-D-ribosyl)imidazole-4-carboxamide from 5-amino-1-(5-phospho-D-ribosyl)imidazole-4-carboxylate: step 1/2.</text>
</comment>
<comment type="similarity">
    <text evidence="1">Belongs to the SAICAR synthetase family.</text>
</comment>
<accession>A5UBF4</accession>
<evidence type="ECO:0000255" key="1">
    <source>
        <dbReference type="HAMAP-Rule" id="MF_00137"/>
    </source>
</evidence>
<keyword id="KW-0067">ATP-binding</keyword>
<keyword id="KW-0436">Ligase</keyword>
<keyword id="KW-0547">Nucleotide-binding</keyword>
<keyword id="KW-0658">Purine biosynthesis</keyword>
<sequence>MTQQSLTLSLKKIYSGKVRDLYEIDDKRMLMVASDRLSAFDVILDDPIPRKGEILTQISNFWFNKLAHIMPNHFTGDSVYDVLPKEEADLIKDRAVVCKRLTPIKIESIVRGYLTGSGLKDYKQTGTICGLKLPENLVEASKLPEAIFTPSSKEEVGNHDINISYAECEKLIGSDLAAQVKEKAIALYTEASEYALTKGIIICDTKFEFGLDENGTLTLMDEVLTPDSSRFWSVDTYQAGTNPPSFDKQFVRDWLENSGWNKQAPAPKVPKNIIQKTVDKYQEALDLLTK</sequence>
<dbReference type="EC" id="6.3.2.6" evidence="1"/>
<dbReference type="EMBL" id="CP000671">
    <property type="protein sequence ID" value="ABQ98105.1"/>
    <property type="molecule type" value="Genomic_DNA"/>
</dbReference>
<dbReference type="SMR" id="A5UBF4"/>
<dbReference type="KEGG" id="hip:CGSHiEE_03420"/>
<dbReference type="HOGENOM" id="CLU_045637_0_2_6"/>
<dbReference type="UniPathway" id="UPA00074">
    <property type="reaction ID" value="UER00131"/>
</dbReference>
<dbReference type="GO" id="GO:0005737">
    <property type="term" value="C:cytoplasm"/>
    <property type="evidence" value="ECO:0007669"/>
    <property type="project" value="TreeGrafter"/>
</dbReference>
<dbReference type="GO" id="GO:0005524">
    <property type="term" value="F:ATP binding"/>
    <property type="evidence" value="ECO:0007669"/>
    <property type="project" value="UniProtKB-KW"/>
</dbReference>
<dbReference type="GO" id="GO:0004639">
    <property type="term" value="F:phosphoribosylaminoimidazolesuccinocarboxamide synthase activity"/>
    <property type="evidence" value="ECO:0007669"/>
    <property type="project" value="UniProtKB-UniRule"/>
</dbReference>
<dbReference type="GO" id="GO:0006189">
    <property type="term" value="P:'de novo' IMP biosynthetic process"/>
    <property type="evidence" value="ECO:0007669"/>
    <property type="project" value="UniProtKB-UniRule"/>
</dbReference>
<dbReference type="CDD" id="cd01414">
    <property type="entry name" value="SAICAR_synt_Sc"/>
    <property type="match status" value="1"/>
</dbReference>
<dbReference type="FunFam" id="3.30.200.20:FF:000365">
    <property type="entry name" value="Phosphoribosylaminoimidazole-succinocarboxamide synthase"/>
    <property type="match status" value="1"/>
</dbReference>
<dbReference type="FunFam" id="3.30.470.20:FF:000015">
    <property type="entry name" value="Phosphoribosylaminoimidazole-succinocarboxamide synthase"/>
    <property type="match status" value="1"/>
</dbReference>
<dbReference type="Gene3D" id="3.30.470.20">
    <property type="entry name" value="ATP-grasp fold, B domain"/>
    <property type="match status" value="1"/>
</dbReference>
<dbReference type="Gene3D" id="3.30.200.20">
    <property type="entry name" value="Phosphorylase Kinase, domain 1"/>
    <property type="match status" value="1"/>
</dbReference>
<dbReference type="HAMAP" id="MF_00137">
    <property type="entry name" value="SAICAR_synth"/>
    <property type="match status" value="1"/>
</dbReference>
<dbReference type="InterPro" id="IPR028923">
    <property type="entry name" value="SAICAR_synt/ADE2_N"/>
</dbReference>
<dbReference type="InterPro" id="IPR001636">
    <property type="entry name" value="SAICAR_synth"/>
</dbReference>
<dbReference type="InterPro" id="IPR018236">
    <property type="entry name" value="SAICAR_synthetase_CS"/>
</dbReference>
<dbReference type="NCBIfam" id="NF010568">
    <property type="entry name" value="PRK13961.1"/>
    <property type="match status" value="1"/>
</dbReference>
<dbReference type="NCBIfam" id="TIGR00081">
    <property type="entry name" value="purC"/>
    <property type="match status" value="1"/>
</dbReference>
<dbReference type="PANTHER" id="PTHR43700">
    <property type="entry name" value="PHOSPHORIBOSYLAMINOIMIDAZOLE-SUCCINOCARBOXAMIDE SYNTHASE"/>
    <property type="match status" value="1"/>
</dbReference>
<dbReference type="PANTHER" id="PTHR43700:SF1">
    <property type="entry name" value="PHOSPHORIBOSYLAMINOIMIDAZOLE-SUCCINOCARBOXAMIDE SYNTHASE"/>
    <property type="match status" value="1"/>
</dbReference>
<dbReference type="Pfam" id="PF01259">
    <property type="entry name" value="SAICAR_synt"/>
    <property type="match status" value="1"/>
</dbReference>
<dbReference type="SUPFAM" id="SSF56104">
    <property type="entry name" value="SAICAR synthase-like"/>
    <property type="match status" value="1"/>
</dbReference>
<dbReference type="PROSITE" id="PS01057">
    <property type="entry name" value="SAICAR_SYNTHETASE_1"/>
    <property type="match status" value="1"/>
</dbReference>
<dbReference type="PROSITE" id="PS01058">
    <property type="entry name" value="SAICAR_SYNTHETASE_2"/>
    <property type="match status" value="1"/>
</dbReference>